<reference key="1">
    <citation type="journal article" date="2009" name="Stand. Genomic Sci.">
        <title>Complete genome sequence of Saccharomonospora viridis type strain (P101).</title>
        <authorList>
            <person name="Pati A."/>
            <person name="Sikorski J."/>
            <person name="Nolan M."/>
            <person name="Lapidus A."/>
            <person name="Copeland A."/>
            <person name="Glavina Del Rio T."/>
            <person name="Lucas S."/>
            <person name="Chen F."/>
            <person name="Tice H."/>
            <person name="Pitluck S."/>
            <person name="Cheng J.F."/>
            <person name="Chertkov O."/>
            <person name="Brettin T."/>
            <person name="Han C."/>
            <person name="Detter J.C."/>
            <person name="Kuske C."/>
            <person name="Bruce D."/>
            <person name="Goodwin L."/>
            <person name="Chain P."/>
            <person name="D'haeseleer P."/>
            <person name="Chen A."/>
            <person name="Palaniappan K."/>
            <person name="Ivanova N."/>
            <person name="Mavromatis K."/>
            <person name="Mikhailova N."/>
            <person name="Rohde M."/>
            <person name="Tindall B.J."/>
            <person name="Goker M."/>
            <person name="Bristow J."/>
            <person name="Eisen J.A."/>
            <person name="Markowitz V."/>
            <person name="Hugenholtz P."/>
            <person name="Kyrpides N.C."/>
            <person name="Klenk H.P."/>
        </authorList>
    </citation>
    <scope>NUCLEOTIDE SEQUENCE [LARGE SCALE GENOMIC DNA]</scope>
    <source>
        <strain>ATCC 15386 / DSM 43017 / JCM 3036 / CCUG 5913 / NBRC 12207 / NCIMB 9602 / P101</strain>
    </source>
</reference>
<keyword id="KW-0067">ATP-binding</keyword>
<keyword id="KW-0436">Ligase</keyword>
<keyword id="KW-0479">Metal-binding</keyword>
<keyword id="KW-0547">Nucleotide-binding</keyword>
<keyword id="KW-1185">Reference proteome</keyword>
<keyword id="KW-0862">Zinc</keyword>
<proteinExistence type="inferred from homology"/>
<organism>
    <name type="scientific">Saccharomonospora viridis (strain ATCC 15386 / DSM 43017 / JCM 3036 / CCUG 5913 / NBRC 12207 / NCIMB 9602 / P101)</name>
    <name type="common">Thermoactinomyces viridis</name>
    <dbReference type="NCBI Taxonomy" id="471857"/>
    <lineage>
        <taxon>Bacteria</taxon>
        <taxon>Bacillati</taxon>
        <taxon>Actinomycetota</taxon>
        <taxon>Actinomycetes</taxon>
        <taxon>Pseudonocardiales</taxon>
        <taxon>Pseudonocardiaceae</taxon>
        <taxon>Saccharomonospora</taxon>
    </lineage>
</organism>
<feature type="chain" id="PRO_0000400479" description="L-cysteine:1D-myo-inositol 2-amino-2-deoxy-alpha-D-glucopyranoside ligase">
    <location>
        <begin position="1"/>
        <end position="415"/>
    </location>
</feature>
<feature type="short sequence motif" description="'HIGH' region" evidence="1">
    <location>
        <begin position="45"/>
        <end position="55"/>
    </location>
</feature>
<feature type="short sequence motif" description="'ERGGDP' region" evidence="1">
    <location>
        <begin position="187"/>
        <end position="192"/>
    </location>
</feature>
<feature type="short sequence motif" description="'KMSKS' region" evidence="1">
    <location>
        <begin position="289"/>
        <end position="293"/>
    </location>
</feature>
<feature type="binding site" evidence="1">
    <location>
        <begin position="43"/>
        <end position="46"/>
    </location>
    <ligand>
        <name>L-cysteinyl-5'-AMP</name>
        <dbReference type="ChEBI" id="CHEBI:144924"/>
    </ligand>
</feature>
<feature type="binding site" evidence="1">
    <location>
        <position position="43"/>
    </location>
    <ligand>
        <name>Zn(2+)</name>
        <dbReference type="ChEBI" id="CHEBI:29105"/>
    </ligand>
</feature>
<feature type="binding site" evidence="1">
    <location>
        <position position="58"/>
    </location>
    <ligand>
        <name>L-cysteinyl-5'-AMP</name>
        <dbReference type="ChEBI" id="CHEBI:144924"/>
    </ligand>
</feature>
<feature type="binding site" evidence="1">
    <location>
        <begin position="81"/>
        <end position="83"/>
    </location>
    <ligand>
        <name>L-cysteinyl-5'-AMP</name>
        <dbReference type="ChEBI" id="CHEBI:144924"/>
    </ligand>
</feature>
<feature type="binding site" evidence="1">
    <location>
        <position position="227"/>
    </location>
    <ligand>
        <name>L-cysteinyl-5'-AMP</name>
        <dbReference type="ChEBI" id="CHEBI:144924"/>
    </ligand>
</feature>
<feature type="binding site" evidence="1">
    <location>
        <position position="231"/>
    </location>
    <ligand>
        <name>Zn(2+)</name>
        <dbReference type="ChEBI" id="CHEBI:29105"/>
    </ligand>
</feature>
<feature type="binding site" evidence="1">
    <location>
        <begin position="249"/>
        <end position="251"/>
    </location>
    <ligand>
        <name>L-cysteinyl-5'-AMP</name>
        <dbReference type="ChEBI" id="CHEBI:144924"/>
    </ligand>
</feature>
<feature type="binding site" evidence="1">
    <location>
        <position position="256"/>
    </location>
    <ligand>
        <name>Zn(2+)</name>
        <dbReference type="ChEBI" id="CHEBI:29105"/>
    </ligand>
</feature>
<feature type="binding site" evidence="1">
    <location>
        <position position="283"/>
    </location>
    <ligand>
        <name>L-cysteinyl-5'-AMP</name>
        <dbReference type="ChEBI" id="CHEBI:144924"/>
    </ligand>
</feature>
<comment type="function">
    <text evidence="1">Catalyzes the ATP-dependent condensation of GlcN-Ins and L-cysteine to form L-Cys-GlcN-Ins.</text>
</comment>
<comment type="catalytic activity">
    <reaction evidence="1">
        <text>1D-myo-inositol 2-amino-2-deoxy-alpha-D-glucopyranoside + L-cysteine + ATP = 1D-myo-inositol 2-(L-cysteinylamino)-2-deoxy-alpha-D-glucopyranoside + AMP + diphosphate + H(+)</text>
        <dbReference type="Rhea" id="RHEA:26176"/>
        <dbReference type="ChEBI" id="CHEBI:15378"/>
        <dbReference type="ChEBI" id="CHEBI:30616"/>
        <dbReference type="ChEBI" id="CHEBI:33019"/>
        <dbReference type="ChEBI" id="CHEBI:35235"/>
        <dbReference type="ChEBI" id="CHEBI:58886"/>
        <dbReference type="ChEBI" id="CHEBI:58887"/>
        <dbReference type="ChEBI" id="CHEBI:456215"/>
        <dbReference type="EC" id="6.3.1.13"/>
    </reaction>
</comment>
<comment type="cofactor">
    <cofactor evidence="1">
        <name>Zn(2+)</name>
        <dbReference type="ChEBI" id="CHEBI:29105"/>
    </cofactor>
    <text evidence="1">Binds 1 zinc ion per subunit.</text>
</comment>
<comment type="subunit">
    <text evidence="1">Monomer.</text>
</comment>
<comment type="similarity">
    <text evidence="1">Belongs to the class-I aminoacyl-tRNA synthetase family. MshC subfamily.</text>
</comment>
<protein>
    <recommendedName>
        <fullName evidence="1">L-cysteine:1D-myo-inositol 2-amino-2-deoxy-alpha-D-glucopyranoside ligase</fullName>
        <shortName evidence="1">L-Cys:GlcN-Ins ligase</shortName>
        <ecNumber evidence="1">6.3.1.13</ecNumber>
    </recommendedName>
    <alternativeName>
        <fullName evidence="1">Mycothiol ligase</fullName>
        <shortName evidence="1">MSH ligase</shortName>
    </alternativeName>
</protein>
<sequence length="415" mass="46005">MQTWSSVAVPRVPGTSRPLRLYDTATGQIRPTAPGRVAKMYVCGITPYDATHLGHAATYLAFDLVHRLWLDAGHEVHYVQNVTDIDDPLLERAERDSEDWVVLGLRETALFREDMEALRVLPPRDFVGAVESIPEVVEMIEKLLASGAAYRVDDPEYPDVYFDRSFTGRFGYESNYDDETMRAIFPERGGDPDRPGKRDPLDALLWRVERPGEPAWDSSLGRGRPGWHIECSAIALKHLGIGFDVQGGGSDLVFPHHEFSAAHAEAMTGEHPFARHYVHAGMIGLDGEKMSKSKGNLVFVSRLRADDVDPSAIRLALFAGHYRDDREWTDELLKQANSRLARWREAVSLPSGPDAEATVDRLRDHLADDLDTPKALAAVDAWVDEALRHRSGTVGSESAPALVRAAVDSLLGVVL</sequence>
<name>MSHC_SACVD</name>
<accession>C7MWX8</accession>
<gene>
    <name evidence="1" type="primary">mshC</name>
    <name type="ordered locus">Svir_22240</name>
</gene>
<dbReference type="EC" id="6.3.1.13" evidence="1"/>
<dbReference type="EMBL" id="CP001683">
    <property type="protein sequence ID" value="ACU97232.1"/>
    <property type="molecule type" value="Genomic_DNA"/>
</dbReference>
<dbReference type="RefSeq" id="WP_015786545.1">
    <property type="nucleotide sequence ID" value="NC_013159.1"/>
</dbReference>
<dbReference type="SMR" id="C7MWX8"/>
<dbReference type="STRING" id="471857.Svir_22240"/>
<dbReference type="KEGG" id="svi:Svir_22240"/>
<dbReference type="eggNOG" id="COG0215">
    <property type="taxonomic scope" value="Bacteria"/>
</dbReference>
<dbReference type="HOGENOM" id="CLU_013528_0_0_11"/>
<dbReference type="Proteomes" id="UP000000841">
    <property type="component" value="Chromosome"/>
</dbReference>
<dbReference type="GO" id="GO:0005829">
    <property type="term" value="C:cytosol"/>
    <property type="evidence" value="ECO:0007669"/>
    <property type="project" value="TreeGrafter"/>
</dbReference>
<dbReference type="GO" id="GO:0005524">
    <property type="term" value="F:ATP binding"/>
    <property type="evidence" value="ECO:0007669"/>
    <property type="project" value="UniProtKB-KW"/>
</dbReference>
<dbReference type="GO" id="GO:0035446">
    <property type="term" value="F:cysteine-glucosaminylinositol ligase activity"/>
    <property type="evidence" value="ECO:0007669"/>
    <property type="project" value="UniProtKB-UniRule"/>
</dbReference>
<dbReference type="GO" id="GO:0004817">
    <property type="term" value="F:cysteine-tRNA ligase activity"/>
    <property type="evidence" value="ECO:0007669"/>
    <property type="project" value="TreeGrafter"/>
</dbReference>
<dbReference type="GO" id="GO:0008270">
    <property type="term" value="F:zinc ion binding"/>
    <property type="evidence" value="ECO:0007669"/>
    <property type="project" value="UniProtKB-UniRule"/>
</dbReference>
<dbReference type="GO" id="GO:0006423">
    <property type="term" value="P:cysteinyl-tRNA aminoacylation"/>
    <property type="evidence" value="ECO:0007669"/>
    <property type="project" value="TreeGrafter"/>
</dbReference>
<dbReference type="GO" id="GO:0010125">
    <property type="term" value="P:mycothiol biosynthetic process"/>
    <property type="evidence" value="ECO:0007669"/>
    <property type="project" value="UniProtKB-UniRule"/>
</dbReference>
<dbReference type="CDD" id="cd07955">
    <property type="entry name" value="Anticodon_Ia_Cys_like"/>
    <property type="match status" value="1"/>
</dbReference>
<dbReference type="CDD" id="cd00672">
    <property type="entry name" value="CysRS_core"/>
    <property type="match status" value="1"/>
</dbReference>
<dbReference type="FunFam" id="3.40.50.620:FF:000134">
    <property type="entry name" value="L-cysteine:1D-myo-inositol 2-amino-2-deoxy-alpha-D-glucopyranoside ligase"/>
    <property type="match status" value="1"/>
</dbReference>
<dbReference type="Gene3D" id="1.20.120.640">
    <property type="entry name" value="Anticodon-binding domain of a subclass of class I aminoacyl-tRNA synthetases"/>
    <property type="match status" value="1"/>
</dbReference>
<dbReference type="Gene3D" id="3.40.50.620">
    <property type="entry name" value="HUPs"/>
    <property type="match status" value="1"/>
</dbReference>
<dbReference type="HAMAP" id="MF_01697">
    <property type="entry name" value="MshC"/>
    <property type="match status" value="1"/>
</dbReference>
<dbReference type="InterPro" id="IPR024909">
    <property type="entry name" value="Cys-tRNA/MSH_ligase"/>
</dbReference>
<dbReference type="InterPro" id="IPR017812">
    <property type="entry name" value="Mycothiol_ligase_MshC"/>
</dbReference>
<dbReference type="InterPro" id="IPR014729">
    <property type="entry name" value="Rossmann-like_a/b/a_fold"/>
</dbReference>
<dbReference type="InterPro" id="IPR032678">
    <property type="entry name" value="tRNA-synt_1_cat_dom"/>
</dbReference>
<dbReference type="NCBIfam" id="TIGR03447">
    <property type="entry name" value="mycothiol_MshC"/>
    <property type="match status" value="1"/>
</dbReference>
<dbReference type="PANTHER" id="PTHR10890:SF3">
    <property type="entry name" value="CYSTEINE--TRNA LIGASE, CYTOPLASMIC"/>
    <property type="match status" value="1"/>
</dbReference>
<dbReference type="PANTHER" id="PTHR10890">
    <property type="entry name" value="CYSTEINYL-TRNA SYNTHETASE"/>
    <property type="match status" value="1"/>
</dbReference>
<dbReference type="Pfam" id="PF01406">
    <property type="entry name" value="tRNA-synt_1e"/>
    <property type="match status" value="1"/>
</dbReference>
<dbReference type="PRINTS" id="PR00983">
    <property type="entry name" value="TRNASYNTHCYS"/>
</dbReference>
<dbReference type="SUPFAM" id="SSF52374">
    <property type="entry name" value="Nucleotidylyl transferase"/>
    <property type="match status" value="1"/>
</dbReference>
<evidence type="ECO:0000255" key="1">
    <source>
        <dbReference type="HAMAP-Rule" id="MF_01697"/>
    </source>
</evidence>